<comment type="function">
    <text>Mitochondrial membrane ATP synthase (F(1)F(0) ATP synthase or Complex V) produces ATP from ADP in the presence of a proton gradient across the membrane which is generated by electron transport complexes of the respiratory chain. F-type ATPases consist of two structural domains, F(1) - containing the extramembraneous catalytic core, and F(0) - containing the membrane proton channel, linked together by a central stalk and a peripheral stalk. During catalysis, ATP synthesis in the catalytic domain of F(1) is coupled via a rotary mechanism of the central stalk subunits to proton translocation. Part of the complex F(0) domain and the peripheric stalk, which acts as a stator to hold the catalytic alpha(3)beta(3) subcomplex and subunit a/ATP6 static relative to the rotary elements.</text>
</comment>
<comment type="subunit">
    <text evidence="1">F-type ATPases have 2 components, CF(1) - the catalytic core - and CF(0) - the membrane proton channel. In yeast, the dimeric form of ATP synthase consists of 17 polypeptides: alpha, beta, gamma, delta, epsilon, 4 (B), 5 (OSCP), 6 (A), 8, 9 (C), d, E (Tim11), f, g, h, i/j and k (By similarity).</text>
</comment>
<comment type="subcellular location">
    <subcellularLocation>
        <location evidence="1">Mitochondrion</location>
    </subcellularLocation>
    <subcellularLocation>
        <location evidence="1">Mitochondrion inner membrane</location>
    </subcellularLocation>
</comment>
<comment type="similarity">
    <text evidence="2">Belongs to the eukaryotic ATPase B chain family.</text>
</comment>
<proteinExistence type="inferred from homology"/>
<gene>
    <name type="primary">ATP4</name>
    <name type="ordered locus">CAGL0H05489g</name>
</gene>
<feature type="transit peptide" description="Mitochondrion" evidence="1">
    <location>
        <begin position="1"/>
        <end position="35"/>
    </location>
</feature>
<feature type="chain" id="PRO_0000002519" description="ATP synthase subunit 4, mitochondrial">
    <location>
        <begin position="36"/>
        <end position="242"/>
    </location>
</feature>
<dbReference type="EMBL" id="CR380954">
    <property type="protein sequence ID" value="CAG59967.1"/>
    <property type="molecule type" value="Genomic_DNA"/>
</dbReference>
<dbReference type="RefSeq" id="XP_447034.1">
    <property type="nucleotide sequence ID" value="XM_447034.1"/>
</dbReference>
<dbReference type="SMR" id="Q6FRW0"/>
<dbReference type="FunCoup" id="Q6FRW0">
    <property type="interactions" value="515"/>
</dbReference>
<dbReference type="STRING" id="284593.Q6FRW0"/>
<dbReference type="EnsemblFungi" id="CAGL0H05489g-T">
    <property type="protein sequence ID" value="CAGL0H05489g-T-p1"/>
    <property type="gene ID" value="CAGL0H05489g"/>
</dbReference>
<dbReference type="KEGG" id="cgr:2888579"/>
<dbReference type="CGD" id="CAL0131524">
    <property type="gene designation" value="CAGL0H05489g"/>
</dbReference>
<dbReference type="VEuPathDB" id="FungiDB:B1J91_H05489g"/>
<dbReference type="VEuPathDB" id="FungiDB:CAGL0H05489g"/>
<dbReference type="eggNOG" id="KOG3976">
    <property type="taxonomic scope" value="Eukaryota"/>
</dbReference>
<dbReference type="HOGENOM" id="CLU_077208_0_0_1"/>
<dbReference type="InParanoid" id="Q6FRW0"/>
<dbReference type="OMA" id="YTEWADG"/>
<dbReference type="Proteomes" id="UP000002428">
    <property type="component" value="Chromosome H"/>
</dbReference>
<dbReference type="GO" id="GO:0005743">
    <property type="term" value="C:mitochondrial inner membrane"/>
    <property type="evidence" value="ECO:0007669"/>
    <property type="project" value="UniProtKB-SubCell"/>
</dbReference>
<dbReference type="GO" id="GO:0045259">
    <property type="term" value="C:proton-transporting ATP synthase complex"/>
    <property type="evidence" value="ECO:0007669"/>
    <property type="project" value="UniProtKB-KW"/>
</dbReference>
<dbReference type="GO" id="GO:0046933">
    <property type="term" value="F:proton-transporting ATP synthase activity, rotational mechanism"/>
    <property type="evidence" value="ECO:0007669"/>
    <property type="project" value="EnsemblFungi"/>
</dbReference>
<dbReference type="GO" id="GO:0046961">
    <property type="term" value="F:proton-transporting ATPase activity, rotational mechanism"/>
    <property type="evidence" value="ECO:0007669"/>
    <property type="project" value="EnsemblFungi"/>
</dbReference>
<dbReference type="GO" id="GO:0065003">
    <property type="term" value="P:protein-containing complex assembly"/>
    <property type="evidence" value="ECO:0007669"/>
    <property type="project" value="EnsemblFungi"/>
</dbReference>
<dbReference type="FunFam" id="1.20.5.2210:FF:000002">
    <property type="entry name" value="ATP synthase subunit 4 mitochondrial"/>
    <property type="match status" value="1"/>
</dbReference>
<dbReference type="Gene3D" id="1.20.5.2210">
    <property type="match status" value="1"/>
</dbReference>
<dbReference type="InterPro" id="IPR008688">
    <property type="entry name" value="ATP_synth_Bsub_B/MI25"/>
</dbReference>
<dbReference type="InterPro" id="IPR013837">
    <property type="entry name" value="ATP_synth_F0_suB"/>
</dbReference>
<dbReference type="PANTHER" id="PTHR12733:SF3">
    <property type="entry name" value="ATP SYNTHASE F(0) COMPLEX SUBUNIT B1, MITOCHONDRIAL"/>
    <property type="match status" value="1"/>
</dbReference>
<dbReference type="PANTHER" id="PTHR12733">
    <property type="entry name" value="MITOCHONDRIAL ATP SYNTHASE B CHAIN"/>
    <property type="match status" value="1"/>
</dbReference>
<dbReference type="Pfam" id="PF05405">
    <property type="entry name" value="Mt_ATP-synt_B"/>
    <property type="match status" value="1"/>
</dbReference>
<dbReference type="SUPFAM" id="SSF161060">
    <property type="entry name" value="ATP synthase B chain-like"/>
    <property type="match status" value="1"/>
</dbReference>
<organism>
    <name type="scientific">Candida glabrata (strain ATCC 2001 / BCRC 20586 / JCM 3761 / NBRC 0622 / NRRL Y-65 / CBS 138)</name>
    <name type="common">Yeast</name>
    <name type="synonym">Nakaseomyces glabratus</name>
    <dbReference type="NCBI Taxonomy" id="284593"/>
    <lineage>
        <taxon>Eukaryota</taxon>
        <taxon>Fungi</taxon>
        <taxon>Dikarya</taxon>
        <taxon>Ascomycota</taxon>
        <taxon>Saccharomycotina</taxon>
        <taxon>Saccharomycetes</taxon>
        <taxon>Saccharomycetales</taxon>
        <taxon>Saccharomycetaceae</taxon>
        <taxon>Nakaseomyces</taxon>
    </lineage>
</organism>
<reference key="1">
    <citation type="journal article" date="2004" name="Nature">
        <title>Genome evolution in yeasts.</title>
        <authorList>
            <person name="Dujon B."/>
            <person name="Sherman D."/>
            <person name="Fischer G."/>
            <person name="Durrens P."/>
            <person name="Casaregola S."/>
            <person name="Lafontaine I."/>
            <person name="de Montigny J."/>
            <person name="Marck C."/>
            <person name="Neuveglise C."/>
            <person name="Talla E."/>
            <person name="Goffard N."/>
            <person name="Frangeul L."/>
            <person name="Aigle M."/>
            <person name="Anthouard V."/>
            <person name="Babour A."/>
            <person name="Barbe V."/>
            <person name="Barnay S."/>
            <person name="Blanchin S."/>
            <person name="Beckerich J.-M."/>
            <person name="Beyne E."/>
            <person name="Bleykasten C."/>
            <person name="Boisrame A."/>
            <person name="Boyer J."/>
            <person name="Cattolico L."/>
            <person name="Confanioleri F."/>
            <person name="de Daruvar A."/>
            <person name="Despons L."/>
            <person name="Fabre E."/>
            <person name="Fairhead C."/>
            <person name="Ferry-Dumazet H."/>
            <person name="Groppi A."/>
            <person name="Hantraye F."/>
            <person name="Hennequin C."/>
            <person name="Jauniaux N."/>
            <person name="Joyet P."/>
            <person name="Kachouri R."/>
            <person name="Kerrest A."/>
            <person name="Koszul R."/>
            <person name="Lemaire M."/>
            <person name="Lesur I."/>
            <person name="Ma L."/>
            <person name="Muller H."/>
            <person name="Nicaud J.-M."/>
            <person name="Nikolski M."/>
            <person name="Oztas S."/>
            <person name="Ozier-Kalogeropoulos O."/>
            <person name="Pellenz S."/>
            <person name="Potier S."/>
            <person name="Richard G.-F."/>
            <person name="Straub M.-L."/>
            <person name="Suleau A."/>
            <person name="Swennen D."/>
            <person name="Tekaia F."/>
            <person name="Wesolowski-Louvel M."/>
            <person name="Westhof E."/>
            <person name="Wirth B."/>
            <person name="Zeniou-Meyer M."/>
            <person name="Zivanovic Y."/>
            <person name="Bolotin-Fukuhara M."/>
            <person name="Thierry A."/>
            <person name="Bouchier C."/>
            <person name="Caudron B."/>
            <person name="Scarpelli C."/>
            <person name="Gaillardin C."/>
            <person name="Weissenbach J."/>
            <person name="Wincker P."/>
            <person name="Souciet J.-L."/>
        </authorList>
    </citation>
    <scope>NUCLEOTIDE SEQUENCE [LARGE SCALE GENOMIC DNA]</scope>
    <source>
        <strain>ATCC 2001 / BCRC 20586 / JCM 3761 / NBRC 0622 / NRRL Y-65 / CBS 138</strain>
    </source>
</reference>
<name>ATPF_CANGA</name>
<sequence>MSFRALTMRSAVARTALNNTIRSARVATPYLGIRHSSSTPTPDPKTKAASLIDALPGNTALTKTGILGTSAAAIIYGISNQLYVINDESILLLIFLGFSGLVAKFLAPLYKDFADARIKKIGSILNSSRERHVDAVKDRIESVSELQNVSETTKVLFDVSKETVELEAKAFELKQKVELAHEAKSVLDSWVRYEASLRQLQQKQIAEGIISKVESELTNPKFQDRVLQQSIAEVEQVLANIK</sequence>
<keyword id="KW-0138">CF(0)</keyword>
<keyword id="KW-0375">Hydrogen ion transport</keyword>
<keyword id="KW-0406">Ion transport</keyword>
<keyword id="KW-0472">Membrane</keyword>
<keyword id="KW-0496">Mitochondrion</keyword>
<keyword id="KW-0999">Mitochondrion inner membrane</keyword>
<keyword id="KW-1185">Reference proteome</keyword>
<keyword id="KW-0809">Transit peptide</keyword>
<keyword id="KW-0813">Transport</keyword>
<protein>
    <recommendedName>
        <fullName>ATP synthase subunit 4, mitochondrial</fullName>
    </recommendedName>
</protein>
<accession>Q6FRW0</accession>
<evidence type="ECO:0000250" key="1"/>
<evidence type="ECO:0000305" key="2"/>